<name>Y1610_AQUAE</name>
<protein>
    <recommendedName>
        <fullName>UPF0758 protein aq_1610</fullName>
    </recommendedName>
</protein>
<comment type="similarity">
    <text evidence="2">Belongs to the UPF0758 family.</text>
</comment>
<feature type="chain" id="PRO_0000190677" description="UPF0758 protein aq_1610">
    <location>
        <begin position="1"/>
        <end position="231"/>
    </location>
</feature>
<feature type="domain" description="MPN" evidence="1">
    <location>
        <begin position="110"/>
        <end position="231"/>
    </location>
</feature>
<feature type="short sequence motif" description="JAMM motif" evidence="1">
    <location>
        <begin position="180"/>
        <end position="193"/>
    </location>
</feature>
<feature type="binding site" evidence="1">
    <location>
        <position position="180"/>
    </location>
    <ligand>
        <name>Zn(2+)</name>
        <dbReference type="ChEBI" id="CHEBI:29105"/>
        <note>catalytic</note>
    </ligand>
</feature>
<feature type="binding site" evidence="1">
    <location>
        <position position="182"/>
    </location>
    <ligand>
        <name>Zn(2+)</name>
        <dbReference type="ChEBI" id="CHEBI:29105"/>
        <note>catalytic</note>
    </ligand>
</feature>
<feature type="binding site" evidence="1">
    <location>
        <position position="193"/>
    </location>
    <ligand>
        <name>Zn(2+)</name>
        <dbReference type="ChEBI" id="CHEBI:29105"/>
        <note>catalytic</note>
    </ligand>
</feature>
<dbReference type="EMBL" id="AE000657">
    <property type="protein sequence ID" value="AAC07500.1"/>
    <property type="molecule type" value="Genomic_DNA"/>
</dbReference>
<dbReference type="PIR" id="C70439">
    <property type="entry name" value="C70439"/>
</dbReference>
<dbReference type="RefSeq" id="NP_214106.1">
    <property type="nucleotide sequence ID" value="NC_000918.1"/>
</dbReference>
<dbReference type="RefSeq" id="WP_010881044.1">
    <property type="nucleotide sequence ID" value="NC_000918.1"/>
</dbReference>
<dbReference type="SMR" id="O67541"/>
<dbReference type="FunCoup" id="O67541">
    <property type="interactions" value="157"/>
</dbReference>
<dbReference type="STRING" id="224324.aq_1610"/>
<dbReference type="EnsemblBacteria" id="AAC07500">
    <property type="protein sequence ID" value="AAC07500"/>
    <property type="gene ID" value="aq_1610"/>
</dbReference>
<dbReference type="KEGG" id="aae:aq_1610"/>
<dbReference type="PATRIC" id="fig|224324.8.peg.1244"/>
<dbReference type="eggNOG" id="COG2003">
    <property type="taxonomic scope" value="Bacteria"/>
</dbReference>
<dbReference type="HOGENOM" id="CLU_073529_0_2_0"/>
<dbReference type="InParanoid" id="O67541"/>
<dbReference type="OrthoDB" id="9804482at2"/>
<dbReference type="Proteomes" id="UP000000798">
    <property type="component" value="Chromosome"/>
</dbReference>
<dbReference type="GO" id="GO:0046872">
    <property type="term" value="F:metal ion binding"/>
    <property type="evidence" value="ECO:0007669"/>
    <property type="project" value="UniProtKB-KW"/>
</dbReference>
<dbReference type="GO" id="GO:0008237">
    <property type="term" value="F:metallopeptidase activity"/>
    <property type="evidence" value="ECO:0007669"/>
    <property type="project" value="UniProtKB-KW"/>
</dbReference>
<dbReference type="GO" id="GO:0006508">
    <property type="term" value="P:proteolysis"/>
    <property type="evidence" value="ECO:0007669"/>
    <property type="project" value="UniProtKB-KW"/>
</dbReference>
<dbReference type="CDD" id="cd08071">
    <property type="entry name" value="MPN_DUF2466"/>
    <property type="match status" value="1"/>
</dbReference>
<dbReference type="Gene3D" id="3.40.140.10">
    <property type="entry name" value="Cytidine Deaminase, domain 2"/>
    <property type="match status" value="1"/>
</dbReference>
<dbReference type="InterPro" id="IPR037518">
    <property type="entry name" value="MPN"/>
</dbReference>
<dbReference type="InterPro" id="IPR025657">
    <property type="entry name" value="RadC_JAB"/>
</dbReference>
<dbReference type="InterPro" id="IPR001405">
    <property type="entry name" value="UPF0758"/>
</dbReference>
<dbReference type="InterPro" id="IPR020891">
    <property type="entry name" value="UPF0758_CS"/>
</dbReference>
<dbReference type="InterPro" id="IPR046778">
    <property type="entry name" value="UPF0758_N"/>
</dbReference>
<dbReference type="NCBIfam" id="NF000642">
    <property type="entry name" value="PRK00024.1"/>
    <property type="match status" value="1"/>
</dbReference>
<dbReference type="NCBIfam" id="TIGR00608">
    <property type="entry name" value="radc"/>
    <property type="match status" value="1"/>
</dbReference>
<dbReference type="PANTHER" id="PTHR30471">
    <property type="entry name" value="DNA REPAIR PROTEIN RADC"/>
    <property type="match status" value="1"/>
</dbReference>
<dbReference type="PANTHER" id="PTHR30471:SF3">
    <property type="entry name" value="UPF0758 PROTEIN YEES-RELATED"/>
    <property type="match status" value="1"/>
</dbReference>
<dbReference type="Pfam" id="PF04002">
    <property type="entry name" value="RadC"/>
    <property type="match status" value="1"/>
</dbReference>
<dbReference type="Pfam" id="PF20582">
    <property type="entry name" value="UPF0758_N"/>
    <property type="match status" value="1"/>
</dbReference>
<dbReference type="PROSITE" id="PS50249">
    <property type="entry name" value="MPN"/>
    <property type="match status" value="1"/>
</dbReference>
<dbReference type="PROSITE" id="PS01302">
    <property type="entry name" value="UPF0758"/>
    <property type="match status" value="1"/>
</dbReference>
<sequence length="231" mass="26215">MGQARDRVNYSFKRLKEIPEELRPREKLLKLGPENLSDEELLAVILGSGSKGADVLSLSKELIKMGWEELEKKSVEELLKVRGLGLVKALQVKALVELSKRFKGGKSRISIRNPQEAFEFLKDKFDERRESLIALYLDLSNRLLDWEVVAIGNVNTVFSKPKDILFKAVKLSANGIIIAHNHPQGEPSPSNEDLNFTERLKKACELLGFELLDHLILSEGRYFSFREEGVL</sequence>
<keyword id="KW-0378">Hydrolase</keyword>
<keyword id="KW-0479">Metal-binding</keyword>
<keyword id="KW-0482">Metalloprotease</keyword>
<keyword id="KW-0645">Protease</keyword>
<keyword id="KW-1185">Reference proteome</keyword>
<keyword id="KW-0862">Zinc</keyword>
<evidence type="ECO:0000255" key="1">
    <source>
        <dbReference type="PROSITE-ProRule" id="PRU01182"/>
    </source>
</evidence>
<evidence type="ECO:0000305" key="2"/>
<organism>
    <name type="scientific">Aquifex aeolicus (strain VF5)</name>
    <dbReference type="NCBI Taxonomy" id="224324"/>
    <lineage>
        <taxon>Bacteria</taxon>
        <taxon>Pseudomonadati</taxon>
        <taxon>Aquificota</taxon>
        <taxon>Aquificia</taxon>
        <taxon>Aquificales</taxon>
        <taxon>Aquificaceae</taxon>
        <taxon>Aquifex</taxon>
    </lineage>
</organism>
<reference key="1">
    <citation type="journal article" date="1998" name="Nature">
        <title>The complete genome of the hyperthermophilic bacterium Aquifex aeolicus.</title>
        <authorList>
            <person name="Deckert G."/>
            <person name="Warren P.V."/>
            <person name="Gaasterland T."/>
            <person name="Young W.G."/>
            <person name="Lenox A.L."/>
            <person name="Graham D.E."/>
            <person name="Overbeek R."/>
            <person name="Snead M.A."/>
            <person name="Keller M."/>
            <person name="Aujay M."/>
            <person name="Huber R."/>
            <person name="Feldman R.A."/>
            <person name="Short J.M."/>
            <person name="Olsen G.J."/>
            <person name="Swanson R.V."/>
        </authorList>
    </citation>
    <scope>NUCLEOTIDE SEQUENCE [LARGE SCALE GENOMIC DNA]</scope>
    <source>
        <strain>VF5</strain>
    </source>
</reference>
<accession>O67541</accession>
<gene>
    <name type="ordered locus">aq_1610</name>
</gene>
<proteinExistence type="inferred from homology"/>